<evidence type="ECO:0000255" key="1">
    <source>
        <dbReference type="HAMAP-Rule" id="MF_00051"/>
    </source>
</evidence>
<feature type="chain" id="PRO_1000006282" description="Serine hydroxymethyltransferase">
    <location>
        <begin position="1"/>
        <end position="418"/>
    </location>
</feature>
<feature type="binding site" evidence="1">
    <location>
        <position position="120"/>
    </location>
    <ligand>
        <name>(6S)-5,6,7,8-tetrahydrofolate</name>
        <dbReference type="ChEBI" id="CHEBI:57453"/>
    </ligand>
</feature>
<feature type="binding site" evidence="1">
    <location>
        <begin position="124"/>
        <end position="126"/>
    </location>
    <ligand>
        <name>(6S)-5,6,7,8-tetrahydrofolate</name>
        <dbReference type="ChEBI" id="CHEBI:57453"/>
    </ligand>
</feature>
<feature type="site" description="Plays an important role in substrate specificity" evidence="1">
    <location>
        <position position="228"/>
    </location>
</feature>
<feature type="modified residue" description="N6-(pyridoxal phosphate)lysine" evidence="1">
    <location>
        <position position="229"/>
    </location>
</feature>
<proteinExistence type="inferred from homology"/>
<keyword id="KW-0028">Amino-acid biosynthesis</keyword>
<keyword id="KW-0963">Cytoplasm</keyword>
<keyword id="KW-0554">One-carbon metabolism</keyword>
<keyword id="KW-0663">Pyridoxal phosphate</keyword>
<keyword id="KW-1185">Reference proteome</keyword>
<keyword id="KW-0808">Transferase</keyword>
<gene>
    <name evidence="1" type="primary">glyA</name>
    <name type="ordered locus">MXAN_4766</name>
</gene>
<comment type="function">
    <text evidence="1">Catalyzes the reversible interconversion of serine and glycine with tetrahydrofolate (THF) serving as the one-carbon carrier. This reaction serves as the major source of one-carbon groups required for the biosynthesis of purines, thymidylate, methionine, and other important biomolecules. Also exhibits THF-independent aldolase activity toward beta-hydroxyamino acids, producing glycine and aldehydes, via a retro-aldol mechanism.</text>
</comment>
<comment type="catalytic activity">
    <reaction evidence="1">
        <text>(6R)-5,10-methylene-5,6,7,8-tetrahydrofolate + glycine + H2O = (6S)-5,6,7,8-tetrahydrofolate + L-serine</text>
        <dbReference type="Rhea" id="RHEA:15481"/>
        <dbReference type="ChEBI" id="CHEBI:15377"/>
        <dbReference type="ChEBI" id="CHEBI:15636"/>
        <dbReference type="ChEBI" id="CHEBI:33384"/>
        <dbReference type="ChEBI" id="CHEBI:57305"/>
        <dbReference type="ChEBI" id="CHEBI:57453"/>
        <dbReference type="EC" id="2.1.2.1"/>
    </reaction>
</comment>
<comment type="cofactor">
    <cofactor evidence="1">
        <name>pyridoxal 5'-phosphate</name>
        <dbReference type="ChEBI" id="CHEBI:597326"/>
    </cofactor>
</comment>
<comment type="pathway">
    <text evidence="1">One-carbon metabolism; tetrahydrofolate interconversion.</text>
</comment>
<comment type="pathway">
    <text evidence="1">Amino-acid biosynthesis; glycine biosynthesis; glycine from L-serine: step 1/1.</text>
</comment>
<comment type="subunit">
    <text evidence="1">Homodimer.</text>
</comment>
<comment type="subcellular location">
    <subcellularLocation>
        <location evidence="1">Cytoplasm</location>
    </subcellularLocation>
</comment>
<comment type="similarity">
    <text evidence="1">Belongs to the SHMT family.</text>
</comment>
<name>GLYA_MYXXD</name>
<accession>Q1D345</accession>
<dbReference type="EC" id="2.1.2.1" evidence="1"/>
<dbReference type="EMBL" id="CP000113">
    <property type="protein sequence ID" value="ABF91510.1"/>
    <property type="molecule type" value="Genomic_DNA"/>
</dbReference>
<dbReference type="RefSeq" id="WP_011554753.1">
    <property type="nucleotide sequence ID" value="NC_008095.1"/>
</dbReference>
<dbReference type="SMR" id="Q1D345"/>
<dbReference type="STRING" id="246197.MXAN_4766"/>
<dbReference type="EnsemblBacteria" id="ABF91510">
    <property type="protein sequence ID" value="ABF91510"/>
    <property type="gene ID" value="MXAN_4766"/>
</dbReference>
<dbReference type="GeneID" id="41362065"/>
<dbReference type="KEGG" id="mxa:MXAN_4766"/>
<dbReference type="eggNOG" id="COG0112">
    <property type="taxonomic scope" value="Bacteria"/>
</dbReference>
<dbReference type="HOGENOM" id="CLU_022477_2_1_7"/>
<dbReference type="OrthoDB" id="9803846at2"/>
<dbReference type="UniPathway" id="UPA00193"/>
<dbReference type="UniPathway" id="UPA00288">
    <property type="reaction ID" value="UER01023"/>
</dbReference>
<dbReference type="Proteomes" id="UP000002402">
    <property type="component" value="Chromosome"/>
</dbReference>
<dbReference type="GO" id="GO:0005829">
    <property type="term" value="C:cytosol"/>
    <property type="evidence" value="ECO:0007669"/>
    <property type="project" value="TreeGrafter"/>
</dbReference>
<dbReference type="GO" id="GO:0004372">
    <property type="term" value="F:glycine hydroxymethyltransferase activity"/>
    <property type="evidence" value="ECO:0007669"/>
    <property type="project" value="UniProtKB-UniRule"/>
</dbReference>
<dbReference type="GO" id="GO:0030170">
    <property type="term" value="F:pyridoxal phosphate binding"/>
    <property type="evidence" value="ECO:0007669"/>
    <property type="project" value="UniProtKB-UniRule"/>
</dbReference>
<dbReference type="GO" id="GO:0019264">
    <property type="term" value="P:glycine biosynthetic process from serine"/>
    <property type="evidence" value="ECO:0007669"/>
    <property type="project" value="UniProtKB-UniRule"/>
</dbReference>
<dbReference type="GO" id="GO:0035999">
    <property type="term" value="P:tetrahydrofolate interconversion"/>
    <property type="evidence" value="ECO:0007669"/>
    <property type="project" value="UniProtKB-UniRule"/>
</dbReference>
<dbReference type="CDD" id="cd00378">
    <property type="entry name" value="SHMT"/>
    <property type="match status" value="1"/>
</dbReference>
<dbReference type="FunFam" id="3.40.640.10:FF:000001">
    <property type="entry name" value="Serine hydroxymethyltransferase"/>
    <property type="match status" value="1"/>
</dbReference>
<dbReference type="FunFam" id="3.90.1150.10:FF:000003">
    <property type="entry name" value="Serine hydroxymethyltransferase"/>
    <property type="match status" value="1"/>
</dbReference>
<dbReference type="Gene3D" id="3.90.1150.10">
    <property type="entry name" value="Aspartate Aminotransferase, domain 1"/>
    <property type="match status" value="1"/>
</dbReference>
<dbReference type="Gene3D" id="3.40.640.10">
    <property type="entry name" value="Type I PLP-dependent aspartate aminotransferase-like (Major domain)"/>
    <property type="match status" value="1"/>
</dbReference>
<dbReference type="HAMAP" id="MF_00051">
    <property type="entry name" value="SHMT"/>
    <property type="match status" value="1"/>
</dbReference>
<dbReference type="InterPro" id="IPR015424">
    <property type="entry name" value="PyrdxlP-dep_Trfase"/>
</dbReference>
<dbReference type="InterPro" id="IPR015421">
    <property type="entry name" value="PyrdxlP-dep_Trfase_major"/>
</dbReference>
<dbReference type="InterPro" id="IPR015422">
    <property type="entry name" value="PyrdxlP-dep_Trfase_small"/>
</dbReference>
<dbReference type="InterPro" id="IPR001085">
    <property type="entry name" value="Ser_HO-MeTrfase"/>
</dbReference>
<dbReference type="InterPro" id="IPR049943">
    <property type="entry name" value="Ser_HO-MeTrfase-like"/>
</dbReference>
<dbReference type="InterPro" id="IPR019798">
    <property type="entry name" value="Ser_HO-MeTrfase_PLP_BS"/>
</dbReference>
<dbReference type="InterPro" id="IPR039429">
    <property type="entry name" value="SHMT-like_dom"/>
</dbReference>
<dbReference type="NCBIfam" id="NF000586">
    <property type="entry name" value="PRK00011.1"/>
    <property type="match status" value="1"/>
</dbReference>
<dbReference type="PANTHER" id="PTHR11680">
    <property type="entry name" value="SERINE HYDROXYMETHYLTRANSFERASE"/>
    <property type="match status" value="1"/>
</dbReference>
<dbReference type="PANTHER" id="PTHR11680:SF50">
    <property type="entry name" value="SERINE HYDROXYMETHYLTRANSFERASE"/>
    <property type="match status" value="1"/>
</dbReference>
<dbReference type="Pfam" id="PF00464">
    <property type="entry name" value="SHMT"/>
    <property type="match status" value="1"/>
</dbReference>
<dbReference type="PIRSF" id="PIRSF000412">
    <property type="entry name" value="SHMT"/>
    <property type="match status" value="1"/>
</dbReference>
<dbReference type="SUPFAM" id="SSF53383">
    <property type="entry name" value="PLP-dependent transferases"/>
    <property type="match status" value="1"/>
</dbReference>
<dbReference type="PROSITE" id="PS00096">
    <property type="entry name" value="SHMT"/>
    <property type="match status" value="1"/>
</dbReference>
<protein>
    <recommendedName>
        <fullName evidence="1">Serine hydroxymethyltransferase</fullName>
        <shortName evidence="1">SHMT</shortName>
        <shortName evidence="1">Serine methylase</shortName>
        <ecNumber evidence="1">2.1.2.1</ecNumber>
    </recommendedName>
</protein>
<organism>
    <name type="scientific">Myxococcus xanthus (strain DK1622)</name>
    <dbReference type="NCBI Taxonomy" id="246197"/>
    <lineage>
        <taxon>Bacteria</taxon>
        <taxon>Pseudomonadati</taxon>
        <taxon>Myxococcota</taxon>
        <taxon>Myxococcia</taxon>
        <taxon>Myxococcales</taxon>
        <taxon>Cystobacterineae</taxon>
        <taxon>Myxococcaceae</taxon>
        <taxon>Myxococcus</taxon>
    </lineage>
</organism>
<sequence length="418" mass="44654">MENIRTLAEVDPEIARVLREETQRQEEGLELIASENFVSPAVMEAVGSVLTNKYAEGYPGKRYYGGCEVVDVAENLAIARAKDLFGADAVNVQAHSGSQANMGAFMALMKPGDTMLSLDLNSGGHLTHGATFNFSGKLYKVVHYGLTRDTETIDFAQVESLAKEHKPKVIVVGASAYPRTLDFAKFREIADAVGAAMLVDMAHIAGLVAAGVHPSPVPVADIVTSTTHKTLRGPRGGLVLSREPYAKAINSQIFPGIQGGPLMHVIAGKAVAFKEALSPEFKAYQRQIVANAKALAEALQRAGLRLTSGGTDNHLMLVDLRPKKLTGKVAEEVLDKAGITVNKNMIPFDPEKPMTTSGVRVGTPAITTRGMREAEMAVVGRLIGEALDAAQDDAALARIKGQVKELSQGFPLYASRLK</sequence>
<reference key="1">
    <citation type="journal article" date="2006" name="Proc. Natl. Acad. Sci. U.S.A.">
        <title>Evolution of sensory complexity recorded in a myxobacterial genome.</title>
        <authorList>
            <person name="Goldman B.S."/>
            <person name="Nierman W.C."/>
            <person name="Kaiser D."/>
            <person name="Slater S.C."/>
            <person name="Durkin A.S."/>
            <person name="Eisen J.A."/>
            <person name="Ronning C.M."/>
            <person name="Barbazuk W.B."/>
            <person name="Blanchard M."/>
            <person name="Field C."/>
            <person name="Halling C."/>
            <person name="Hinkle G."/>
            <person name="Iartchuk O."/>
            <person name="Kim H.S."/>
            <person name="Mackenzie C."/>
            <person name="Madupu R."/>
            <person name="Miller N."/>
            <person name="Shvartsbeyn A."/>
            <person name="Sullivan S.A."/>
            <person name="Vaudin M."/>
            <person name="Wiegand R."/>
            <person name="Kaplan H.B."/>
        </authorList>
    </citation>
    <scope>NUCLEOTIDE SEQUENCE [LARGE SCALE GENOMIC DNA]</scope>
    <source>
        <strain>DK1622</strain>
    </source>
</reference>